<protein>
    <recommendedName>
        <fullName evidence="1">Tyrosine--tRNA ligase</fullName>
        <ecNumber evidence="1">6.1.1.1</ecNumber>
    </recommendedName>
    <alternativeName>
        <fullName evidence="1">Tyrosyl-tRNA synthetase</fullName>
        <shortName evidence="1">TyrRS</shortName>
    </alternativeName>
</protein>
<name>SYY_RICM5</name>
<organism>
    <name type="scientific">Rickettsia massiliae (strain Mtu5)</name>
    <dbReference type="NCBI Taxonomy" id="416276"/>
    <lineage>
        <taxon>Bacteria</taxon>
        <taxon>Pseudomonadati</taxon>
        <taxon>Pseudomonadota</taxon>
        <taxon>Alphaproteobacteria</taxon>
        <taxon>Rickettsiales</taxon>
        <taxon>Rickettsiaceae</taxon>
        <taxon>Rickettsieae</taxon>
        <taxon>Rickettsia</taxon>
        <taxon>spotted fever group</taxon>
    </lineage>
</organism>
<gene>
    <name evidence="1" type="primary">tyrS</name>
    <name type="ordered locus">RMA_0860</name>
</gene>
<comment type="function">
    <text evidence="1">Catalyzes the attachment of tyrosine to tRNA(Tyr) in a two-step reaction: tyrosine is first activated by ATP to form Tyr-AMP and then transferred to the acceptor end of tRNA(Tyr).</text>
</comment>
<comment type="catalytic activity">
    <reaction evidence="1">
        <text>tRNA(Tyr) + L-tyrosine + ATP = L-tyrosyl-tRNA(Tyr) + AMP + diphosphate + H(+)</text>
        <dbReference type="Rhea" id="RHEA:10220"/>
        <dbReference type="Rhea" id="RHEA-COMP:9706"/>
        <dbReference type="Rhea" id="RHEA-COMP:9707"/>
        <dbReference type="ChEBI" id="CHEBI:15378"/>
        <dbReference type="ChEBI" id="CHEBI:30616"/>
        <dbReference type="ChEBI" id="CHEBI:33019"/>
        <dbReference type="ChEBI" id="CHEBI:58315"/>
        <dbReference type="ChEBI" id="CHEBI:78442"/>
        <dbReference type="ChEBI" id="CHEBI:78536"/>
        <dbReference type="ChEBI" id="CHEBI:456215"/>
        <dbReference type="EC" id="6.1.1.1"/>
    </reaction>
</comment>
<comment type="subunit">
    <text evidence="1">Homodimer.</text>
</comment>
<comment type="subcellular location">
    <subcellularLocation>
        <location evidence="1">Cytoplasm</location>
    </subcellularLocation>
</comment>
<comment type="similarity">
    <text evidence="1">Belongs to the class-I aminoacyl-tRNA synthetase family. TyrS type 1 subfamily.</text>
</comment>
<dbReference type="EC" id="6.1.1.1" evidence="1"/>
<dbReference type="EMBL" id="CP000683">
    <property type="protein sequence ID" value="ABV84964.1"/>
    <property type="molecule type" value="Genomic_DNA"/>
</dbReference>
<dbReference type="RefSeq" id="WP_012152937.1">
    <property type="nucleotide sequence ID" value="NC_009900.1"/>
</dbReference>
<dbReference type="SMR" id="A8F228"/>
<dbReference type="KEGG" id="rms:RMA_0860"/>
<dbReference type="HOGENOM" id="CLU_024003_0_3_5"/>
<dbReference type="Proteomes" id="UP000001311">
    <property type="component" value="Chromosome"/>
</dbReference>
<dbReference type="GO" id="GO:0005829">
    <property type="term" value="C:cytosol"/>
    <property type="evidence" value="ECO:0007669"/>
    <property type="project" value="TreeGrafter"/>
</dbReference>
<dbReference type="GO" id="GO:0005524">
    <property type="term" value="F:ATP binding"/>
    <property type="evidence" value="ECO:0007669"/>
    <property type="project" value="UniProtKB-UniRule"/>
</dbReference>
<dbReference type="GO" id="GO:0003723">
    <property type="term" value="F:RNA binding"/>
    <property type="evidence" value="ECO:0007669"/>
    <property type="project" value="UniProtKB-KW"/>
</dbReference>
<dbReference type="GO" id="GO:0004831">
    <property type="term" value="F:tyrosine-tRNA ligase activity"/>
    <property type="evidence" value="ECO:0007669"/>
    <property type="project" value="UniProtKB-UniRule"/>
</dbReference>
<dbReference type="GO" id="GO:0006437">
    <property type="term" value="P:tyrosyl-tRNA aminoacylation"/>
    <property type="evidence" value="ECO:0007669"/>
    <property type="project" value="UniProtKB-UniRule"/>
</dbReference>
<dbReference type="CDD" id="cd00165">
    <property type="entry name" value="S4"/>
    <property type="match status" value="1"/>
</dbReference>
<dbReference type="CDD" id="cd00805">
    <property type="entry name" value="TyrRS_core"/>
    <property type="match status" value="1"/>
</dbReference>
<dbReference type="Gene3D" id="3.40.50.620">
    <property type="entry name" value="HUPs"/>
    <property type="match status" value="1"/>
</dbReference>
<dbReference type="Gene3D" id="3.10.290.10">
    <property type="entry name" value="RNA-binding S4 domain"/>
    <property type="match status" value="1"/>
</dbReference>
<dbReference type="Gene3D" id="1.10.240.10">
    <property type="entry name" value="Tyrosyl-Transfer RNA Synthetase"/>
    <property type="match status" value="1"/>
</dbReference>
<dbReference type="HAMAP" id="MF_02006">
    <property type="entry name" value="Tyr_tRNA_synth_type1"/>
    <property type="match status" value="1"/>
</dbReference>
<dbReference type="InterPro" id="IPR002305">
    <property type="entry name" value="aa-tRNA-synth_Ic"/>
</dbReference>
<dbReference type="InterPro" id="IPR014729">
    <property type="entry name" value="Rossmann-like_a/b/a_fold"/>
</dbReference>
<dbReference type="InterPro" id="IPR036986">
    <property type="entry name" value="S4_RNA-bd_sf"/>
</dbReference>
<dbReference type="InterPro" id="IPR054608">
    <property type="entry name" value="SYY-like_C"/>
</dbReference>
<dbReference type="InterPro" id="IPR002307">
    <property type="entry name" value="Tyr-tRNA-ligase"/>
</dbReference>
<dbReference type="InterPro" id="IPR024088">
    <property type="entry name" value="Tyr-tRNA-ligase_bac-type"/>
</dbReference>
<dbReference type="InterPro" id="IPR024107">
    <property type="entry name" value="Tyr-tRNA-ligase_bac_1"/>
</dbReference>
<dbReference type="NCBIfam" id="TIGR00234">
    <property type="entry name" value="tyrS"/>
    <property type="match status" value="1"/>
</dbReference>
<dbReference type="PANTHER" id="PTHR11766:SF0">
    <property type="entry name" value="TYROSINE--TRNA LIGASE, MITOCHONDRIAL"/>
    <property type="match status" value="1"/>
</dbReference>
<dbReference type="PANTHER" id="PTHR11766">
    <property type="entry name" value="TYROSYL-TRNA SYNTHETASE"/>
    <property type="match status" value="1"/>
</dbReference>
<dbReference type="Pfam" id="PF22421">
    <property type="entry name" value="SYY_C-terminal"/>
    <property type="match status" value="1"/>
</dbReference>
<dbReference type="Pfam" id="PF00579">
    <property type="entry name" value="tRNA-synt_1b"/>
    <property type="match status" value="1"/>
</dbReference>
<dbReference type="PRINTS" id="PR01040">
    <property type="entry name" value="TRNASYNTHTYR"/>
</dbReference>
<dbReference type="SUPFAM" id="SSF55174">
    <property type="entry name" value="Alpha-L RNA-binding motif"/>
    <property type="match status" value="1"/>
</dbReference>
<dbReference type="SUPFAM" id="SSF52374">
    <property type="entry name" value="Nucleotidylyl transferase"/>
    <property type="match status" value="1"/>
</dbReference>
<dbReference type="PROSITE" id="PS50889">
    <property type="entry name" value="S4"/>
    <property type="match status" value="1"/>
</dbReference>
<feature type="chain" id="PRO_1000088615" description="Tyrosine--tRNA ligase">
    <location>
        <begin position="1"/>
        <end position="411"/>
    </location>
</feature>
<feature type="domain" description="S4 RNA-binding" evidence="1">
    <location>
        <begin position="345"/>
        <end position="411"/>
    </location>
</feature>
<feature type="short sequence motif" description="'HIGH' region">
    <location>
        <begin position="39"/>
        <end position="48"/>
    </location>
</feature>
<feature type="short sequence motif" description="'KMSKS' region">
    <location>
        <begin position="231"/>
        <end position="235"/>
    </location>
</feature>
<feature type="binding site" evidence="1">
    <location>
        <position position="34"/>
    </location>
    <ligand>
        <name>L-tyrosine</name>
        <dbReference type="ChEBI" id="CHEBI:58315"/>
    </ligand>
</feature>
<feature type="binding site" evidence="1">
    <location>
        <position position="171"/>
    </location>
    <ligand>
        <name>L-tyrosine</name>
        <dbReference type="ChEBI" id="CHEBI:58315"/>
    </ligand>
</feature>
<feature type="binding site" evidence="1">
    <location>
        <position position="175"/>
    </location>
    <ligand>
        <name>L-tyrosine</name>
        <dbReference type="ChEBI" id="CHEBI:58315"/>
    </ligand>
</feature>
<feature type="binding site" evidence="1">
    <location>
        <position position="234"/>
    </location>
    <ligand>
        <name>ATP</name>
        <dbReference type="ChEBI" id="CHEBI:30616"/>
    </ligand>
</feature>
<proteinExistence type="inferred from homology"/>
<keyword id="KW-0030">Aminoacyl-tRNA synthetase</keyword>
<keyword id="KW-0067">ATP-binding</keyword>
<keyword id="KW-0963">Cytoplasm</keyword>
<keyword id="KW-0436">Ligase</keyword>
<keyword id="KW-0547">Nucleotide-binding</keyword>
<keyword id="KW-0648">Protein biosynthesis</keyword>
<keyword id="KW-0694">RNA-binding</keyword>
<evidence type="ECO:0000255" key="1">
    <source>
        <dbReference type="HAMAP-Rule" id="MF_02006"/>
    </source>
</evidence>
<sequence>MRFIEEFINKGYFHQCTDLDRLTAITKETKIAAYIGFDCTATSLHIGSLMQIMILRLLQQHGHKPIVIIGGGTSKIGDPTWKDEVRKILSKEDIAKNAEGIKKSLSKFIKFGDGKSDAIMLDNAEWLDSFNYLDFLRDFGSYFSVNRMLTMDSVKLRLEREQHLSFLEFNYMLLQAYDFYYLSKHYNCSLQLGGSDQWGNIVMGADLIRKISGKEVFGMTTPLLTTSSGAKMGKTAAGAVWLNEDLLSPYDYYQYWRNCEDADIVRFAKLYSEFTQEELNRFEILAAEDINAAKKQLAYELTKLCHSEQAAKSALETAVKIFEEGQIDENLPTVVLEQEVLQAGISAYELFHEAGLATSKSEARKLIRGNGAKINDRLVEDENMIINTNFLLDKNVIKLSAGKKRHILVRV</sequence>
<reference key="1">
    <citation type="journal article" date="2007" name="Genome Res.">
        <title>Lateral gene transfer between obligate intracellular bacteria: evidence from the Rickettsia massiliae genome.</title>
        <authorList>
            <person name="Blanc G."/>
            <person name="Ogata H."/>
            <person name="Robert C."/>
            <person name="Audic S."/>
            <person name="Claverie J.-M."/>
            <person name="Raoult D."/>
        </authorList>
    </citation>
    <scope>NUCLEOTIDE SEQUENCE [LARGE SCALE GENOMIC DNA]</scope>
    <source>
        <strain>Mtu5</strain>
    </source>
</reference>
<accession>A8F228</accession>